<organism>
    <name type="scientific">Thermosynechococcus vestitus (strain NIES-2133 / IAM M-273 / BP-1)</name>
    <dbReference type="NCBI Taxonomy" id="197221"/>
    <lineage>
        <taxon>Bacteria</taxon>
        <taxon>Bacillati</taxon>
        <taxon>Cyanobacteriota</taxon>
        <taxon>Cyanophyceae</taxon>
        <taxon>Acaryochloridales</taxon>
        <taxon>Thermosynechococcaceae</taxon>
        <taxon>Thermosynechococcus</taxon>
    </lineage>
</organism>
<name>LEU3_THEVB</name>
<feature type="chain" id="PRO_0000083766" description="3-isopropylmalate dehydrogenase">
    <location>
        <begin position="1"/>
        <end position="361"/>
    </location>
</feature>
<feature type="binding site" evidence="1">
    <location>
        <begin position="78"/>
        <end position="91"/>
    </location>
    <ligand>
        <name>NAD(+)</name>
        <dbReference type="ChEBI" id="CHEBI:57540"/>
    </ligand>
</feature>
<feature type="binding site" evidence="1">
    <location>
        <position position="98"/>
    </location>
    <ligand>
        <name>substrate</name>
    </ligand>
</feature>
<feature type="binding site" evidence="1">
    <location>
        <position position="108"/>
    </location>
    <ligand>
        <name>substrate</name>
    </ligand>
</feature>
<feature type="binding site" evidence="1">
    <location>
        <position position="136"/>
    </location>
    <ligand>
        <name>substrate</name>
    </ligand>
</feature>
<feature type="binding site" evidence="1">
    <location>
        <position position="226"/>
    </location>
    <ligand>
        <name>Mg(2+)</name>
        <dbReference type="ChEBI" id="CHEBI:18420"/>
    </ligand>
</feature>
<feature type="binding site" evidence="1">
    <location>
        <position position="226"/>
    </location>
    <ligand>
        <name>substrate</name>
    </ligand>
</feature>
<feature type="binding site" evidence="1">
    <location>
        <position position="250"/>
    </location>
    <ligand>
        <name>Mg(2+)</name>
        <dbReference type="ChEBI" id="CHEBI:18420"/>
    </ligand>
</feature>
<feature type="binding site" evidence="1">
    <location>
        <position position="254"/>
    </location>
    <ligand>
        <name>Mg(2+)</name>
        <dbReference type="ChEBI" id="CHEBI:18420"/>
    </ligand>
</feature>
<feature type="binding site" evidence="1">
    <location>
        <begin position="284"/>
        <end position="296"/>
    </location>
    <ligand>
        <name>NAD(+)</name>
        <dbReference type="ChEBI" id="CHEBI:57540"/>
    </ligand>
</feature>
<feature type="site" description="Important for catalysis" evidence="1">
    <location>
        <position position="143"/>
    </location>
</feature>
<feature type="site" description="Important for catalysis" evidence="1">
    <location>
        <position position="194"/>
    </location>
</feature>
<keyword id="KW-0028">Amino-acid biosynthesis</keyword>
<keyword id="KW-0100">Branched-chain amino acid biosynthesis</keyword>
<keyword id="KW-0963">Cytoplasm</keyword>
<keyword id="KW-0432">Leucine biosynthesis</keyword>
<keyword id="KW-0460">Magnesium</keyword>
<keyword id="KW-0464">Manganese</keyword>
<keyword id="KW-0479">Metal-binding</keyword>
<keyword id="KW-0520">NAD</keyword>
<keyword id="KW-0560">Oxidoreductase</keyword>
<keyword id="KW-1185">Reference proteome</keyword>
<comment type="function">
    <text evidence="1">Catalyzes the oxidation of 3-carboxy-2-hydroxy-4-methylpentanoate (3-isopropylmalate) to 3-carboxy-4-methyl-2-oxopentanoate. The product decarboxylates to 4-methyl-2 oxopentanoate.</text>
</comment>
<comment type="catalytic activity">
    <reaction evidence="1">
        <text>(2R,3S)-3-isopropylmalate + NAD(+) = 4-methyl-2-oxopentanoate + CO2 + NADH</text>
        <dbReference type="Rhea" id="RHEA:32271"/>
        <dbReference type="ChEBI" id="CHEBI:16526"/>
        <dbReference type="ChEBI" id="CHEBI:17865"/>
        <dbReference type="ChEBI" id="CHEBI:35121"/>
        <dbReference type="ChEBI" id="CHEBI:57540"/>
        <dbReference type="ChEBI" id="CHEBI:57945"/>
        <dbReference type="EC" id="1.1.1.85"/>
    </reaction>
</comment>
<comment type="cofactor">
    <cofactor evidence="1">
        <name>Mg(2+)</name>
        <dbReference type="ChEBI" id="CHEBI:18420"/>
    </cofactor>
    <cofactor evidence="1">
        <name>Mn(2+)</name>
        <dbReference type="ChEBI" id="CHEBI:29035"/>
    </cofactor>
    <text evidence="1">Binds 1 Mg(2+) or Mn(2+) ion per subunit.</text>
</comment>
<comment type="pathway">
    <text evidence="1">Amino-acid biosynthesis; L-leucine biosynthesis; L-leucine from 3-methyl-2-oxobutanoate: step 3/4.</text>
</comment>
<comment type="subunit">
    <text evidence="1">Homodimer.</text>
</comment>
<comment type="subcellular location">
    <subcellularLocation>
        <location evidence="1">Cytoplasm</location>
    </subcellularLocation>
</comment>
<comment type="similarity">
    <text evidence="1">Belongs to the isocitrate and isopropylmalate dehydrogenases family. LeuB type 1 subfamily.</text>
</comment>
<accession>P59029</accession>
<gene>
    <name evidence="1" type="primary">leuB</name>
    <name type="ordered locus">tlr1600</name>
</gene>
<sequence>MATTYRIAVLAGDGIGPEITAVALDVLRAIAPRFGLDFDFVPALVGGCAIDAVGEPLPAATLATCRQSDAVLLAAIGGTQWDSLPRHLRPETGLLALRSGLGLFANLRPAKIFPQLLHASSLKPEVIAGVDLMVVRELTGGIYFGQPRGIFTTETGEQRGVNTMAYTATEIDRIGRVAFETARKRQGKLCSVDKANVLEVSQLWRDRLTALSAEYPDVELTHLYVDNAAMQLVRAPKQFDTIVTSNLFGDILSDIAAMLTGSIGMLPSASLGESGPALFEPVHGSAPDIAGQDKANPLAMVLSAAMMLRYGLNQPAAAQAIEEAITAVLDQGYRTGDLMSEGCTLVGCREMGNLLIKELSR</sequence>
<proteinExistence type="inferred from homology"/>
<evidence type="ECO:0000255" key="1">
    <source>
        <dbReference type="HAMAP-Rule" id="MF_01033"/>
    </source>
</evidence>
<dbReference type="EC" id="1.1.1.85" evidence="1"/>
<dbReference type="EMBL" id="BA000039">
    <property type="protein sequence ID" value="BAC09152.1"/>
    <property type="molecule type" value="Genomic_DNA"/>
</dbReference>
<dbReference type="RefSeq" id="NP_682390.1">
    <property type="nucleotide sequence ID" value="NC_004113.1"/>
</dbReference>
<dbReference type="RefSeq" id="WP_011057439.1">
    <property type="nucleotide sequence ID" value="NC_004113.1"/>
</dbReference>
<dbReference type="SMR" id="P59029"/>
<dbReference type="STRING" id="197221.gene:10748202"/>
<dbReference type="EnsemblBacteria" id="BAC09152">
    <property type="protein sequence ID" value="BAC09152"/>
    <property type="gene ID" value="BAC09152"/>
</dbReference>
<dbReference type="KEGG" id="tel:tlr1600"/>
<dbReference type="PATRIC" id="fig|197221.4.peg.1678"/>
<dbReference type="eggNOG" id="COG0473">
    <property type="taxonomic scope" value="Bacteria"/>
</dbReference>
<dbReference type="UniPathway" id="UPA00048">
    <property type="reaction ID" value="UER00072"/>
</dbReference>
<dbReference type="Proteomes" id="UP000000440">
    <property type="component" value="Chromosome"/>
</dbReference>
<dbReference type="GO" id="GO:0005829">
    <property type="term" value="C:cytosol"/>
    <property type="evidence" value="ECO:0007669"/>
    <property type="project" value="TreeGrafter"/>
</dbReference>
<dbReference type="GO" id="GO:0003862">
    <property type="term" value="F:3-isopropylmalate dehydrogenase activity"/>
    <property type="evidence" value="ECO:0007669"/>
    <property type="project" value="UniProtKB-UniRule"/>
</dbReference>
<dbReference type="GO" id="GO:0000287">
    <property type="term" value="F:magnesium ion binding"/>
    <property type="evidence" value="ECO:0007669"/>
    <property type="project" value="InterPro"/>
</dbReference>
<dbReference type="GO" id="GO:0051287">
    <property type="term" value="F:NAD binding"/>
    <property type="evidence" value="ECO:0007669"/>
    <property type="project" value="InterPro"/>
</dbReference>
<dbReference type="GO" id="GO:0009098">
    <property type="term" value="P:L-leucine biosynthetic process"/>
    <property type="evidence" value="ECO:0007669"/>
    <property type="project" value="UniProtKB-UniRule"/>
</dbReference>
<dbReference type="FunFam" id="3.40.718.10:FF:000004">
    <property type="entry name" value="3-isopropylmalate dehydrogenase"/>
    <property type="match status" value="1"/>
</dbReference>
<dbReference type="Gene3D" id="3.40.718.10">
    <property type="entry name" value="Isopropylmalate Dehydrogenase"/>
    <property type="match status" value="1"/>
</dbReference>
<dbReference type="HAMAP" id="MF_01033">
    <property type="entry name" value="LeuB_type1"/>
    <property type="match status" value="1"/>
</dbReference>
<dbReference type="InterPro" id="IPR019818">
    <property type="entry name" value="IsoCit/isopropylmalate_DH_CS"/>
</dbReference>
<dbReference type="InterPro" id="IPR024084">
    <property type="entry name" value="IsoPropMal-DH-like_dom"/>
</dbReference>
<dbReference type="InterPro" id="IPR004429">
    <property type="entry name" value="Isopropylmalate_DH"/>
</dbReference>
<dbReference type="NCBIfam" id="TIGR00169">
    <property type="entry name" value="leuB"/>
    <property type="match status" value="1"/>
</dbReference>
<dbReference type="PANTHER" id="PTHR42979">
    <property type="entry name" value="3-ISOPROPYLMALATE DEHYDROGENASE"/>
    <property type="match status" value="1"/>
</dbReference>
<dbReference type="PANTHER" id="PTHR42979:SF1">
    <property type="entry name" value="3-ISOPROPYLMALATE DEHYDROGENASE"/>
    <property type="match status" value="1"/>
</dbReference>
<dbReference type="Pfam" id="PF00180">
    <property type="entry name" value="Iso_dh"/>
    <property type="match status" value="1"/>
</dbReference>
<dbReference type="SMART" id="SM01329">
    <property type="entry name" value="Iso_dh"/>
    <property type="match status" value="1"/>
</dbReference>
<dbReference type="SUPFAM" id="SSF53659">
    <property type="entry name" value="Isocitrate/Isopropylmalate dehydrogenase-like"/>
    <property type="match status" value="1"/>
</dbReference>
<dbReference type="PROSITE" id="PS00470">
    <property type="entry name" value="IDH_IMDH"/>
    <property type="match status" value="1"/>
</dbReference>
<protein>
    <recommendedName>
        <fullName evidence="1">3-isopropylmalate dehydrogenase</fullName>
        <ecNumber evidence="1">1.1.1.85</ecNumber>
    </recommendedName>
    <alternativeName>
        <fullName evidence="1">3-IPM-DH</fullName>
    </alternativeName>
    <alternativeName>
        <fullName evidence="1">Beta-IPM dehydrogenase</fullName>
        <shortName evidence="1">IMDH</shortName>
    </alternativeName>
</protein>
<reference key="1">
    <citation type="journal article" date="2002" name="DNA Res.">
        <title>Complete genome structure of the thermophilic cyanobacterium Thermosynechococcus elongatus BP-1.</title>
        <authorList>
            <person name="Nakamura Y."/>
            <person name="Kaneko T."/>
            <person name="Sato S."/>
            <person name="Ikeuchi M."/>
            <person name="Katoh H."/>
            <person name="Sasamoto S."/>
            <person name="Watanabe A."/>
            <person name="Iriguchi M."/>
            <person name="Kawashima K."/>
            <person name="Kimura T."/>
            <person name="Kishida Y."/>
            <person name="Kiyokawa C."/>
            <person name="Kohara M."/>
            <person name="Matsumoto M."/>
            <person name="Matsuno A."/>
            <person name="Nakazaki N."/>
            <person name="Shimpo S."/>
            <person name="Sugimoto M."/>
            <person name="Takeuchi C."/>
            <person name="Yamada M."/>
            <person name="Tabata S."/>
        </authorList>
    </citation>
    <scope>NUCLEOTIDE SEQUENCE [LARGE SCALE GENOMIC DNA]</scope>
    <source>
        <strain>NIES-2133 / IAM M-273 / BP-1</strain>
    </source>
</reference>